<sequence>MMKKGIHPEYIPCKVTCVTSGKQLEVLSTKSELRIDISSFCHPFYTGSDKITDITGRVEKFRQKYNMK</sequence>
<comment type="function">
    <text evidence="1">Binds the 23S rRNA.</text>
</comment>
<comment type="subunit">
    <text evidence="1">Part of the 50S ribosomal subunit.</text>
</comment>
<comment type="similarity">
    <text evidence="1">Belongs to the bacterial ribosomal protein bL31 family. Type A subfamily.</text>
</comment>
<proteinExistence type="inferred from homology"/>
<accession>Q7VFD3</accession>
<protein>
    <recommendedName>
        <fullName evidence="1">Large ribosomal subunit protein bL31</fullName>
    </recommendedName>
    <alternativeName>
        <fullName evidence="2">50S ribosomal protein L31</fullName>
    </alternativeName>
</protein>
<dbReference type="EMBL" id="AE017125">
    <property type="protein sequence ID" value="AAP78341.1"/>
    <property type="molecule type" value="Genomic_DNA"/>
</dbReference>
<dbReference type="SMR" id="Q7VFD3"/>
<dbReference type="STRING" id="235279.HH_1744"/>
<dbReference type="KEGG" id="hhe:HH_1744"/>
<dbReference type="eggNOG" id="COG0254">
    <property type="taxonomic scope" value="Bacteria"/>
</dbReference>
<dbReference type="HOGENOM" id="CLU_114306_4_3_7"/>
<dbReference type="Proteomes" id="UP000002495">
    <property type="component" value="Chromosome"/>
</dbReference>
<dbReference type="GO" id="GO:1990904">
    <property type="term" value="C:ribonucleoprotein complex"/>
    <property type="evidence" value="ECO:0007669"/>
    <property type="project" value="UniProtKB-KW"/>
</dbReference>
<dbReference type="GO" id="GO:0005840">
    <property type="term" value="C:ribosome"/>
    <property type="evidence" value="ECO:0007669"/>
    <property type="project" value="UniProtKB-KW"/>
</dbReference>
<dbReference type="GO" id="GO:0019843">
    <property type="term" value="F:rRNA binding"/>
    <property type="evidence" value="ECO:0007669"/>
    <property type="project" value="UniProtKB-KW"/>
</dbReference>
<dbReference type="GO" id="GO:0003735">
    <property type="term" value="F:structural constituent of ribosome"/>
    <property type="evidence" value="ECO:0007669"/>
    <property type="project" value="InterPro"/>
</dbReference>
<dbReference type="GO" id="GO:0006412">
    <property type="term" value="P:translation"/>
    <property type="evidence" value="ECO:0007669"/>
    <property type="project" value="UniProtKB-UniRule"/>
</dbReference>
<dbReference type="Gene3D" id="4.10.830.30">
    <property type="entry name" value="Ribosomal protein L31"/>
    <property type="match status" value="1"/>
</dbReference>
<dbReference type="HAMAP" id="MF_00501">
    <property type="entry name" value="Ribosomal_bL31_1"/>
    <property type="match status" value="1"/>
</dbReference>
<dbReference type="InterPro" id="IPR034704">
    <property type="entry name" value="Ribosomal_bL28/bL31-like_sf"/>
</dbReference>
<dbReference type="InterPro" id="IPR002150">
    <property type="entry name" value="Ribosomal_bL31"/>
</dbReference>
<dbReference type="InterPro" id="IPR027491">
    <property type="entry name" value="Ribosomal_bL31_A"/>
</dbReference>
<dbReference type="InterPro" id="IPR042105">
    <property type="entry name" value="Ribosomal_bL31_sf"/>
</dbReference>
<dbReference type="NCBIfam" id="TIGR00105">
    <property type="entry name" value="L31"/>
    <property type="match status" value="1"/>
</dbReference>
<dbReference type="NCBIfam" id="NF000612">
    <property type="entry name" value="PRK00019.1"/>
    <property type="match status" value="1"/>
</dbReference>
<dbReference type="NCBIfam" id="NF001809">
    <property type="entry name" value="PRK00528.1"/>
    <property type="match status" value="1"/>
</dbReference>
<dbReference type="PANTHER" id="PTHR33280">
    <property type="entry name" value="50S RIBOSOMAL PROTEIN L31, CHLOROPLASTIC"/>
    <property type="match status" value="1"/>
</dbReference>
<dbReference type="PANTHER" id="PTHR33280:SF6">
    <property type="entry name" value="LARGE RIBOSOMAL SUBUNIT PROTEIN BL31A"/>
    <property type="match status" value="1"/>
</dbReference>
<dbReference type="Pfam" id="PF01197">
    <property type="entry name" value="Ribosomal_L31"/>
    <property type="match status" value="1"/>
</dbReference>
<dbReference type="PRINTS" id="PR01249">
    <property type="entry name" value="RIBOSOMALL31"/>
</dbReference>
<dbReference type="SUPFAM" id="SSF143800">
    <property type="entry name" value="L28p-like"/>
    <property type="match status" value="1"/>
</dbReference>
<dbReference type="PROSITE" id="PS01143">
    <property type="entry name" value="RIBOSOMAL_L31"/>
    <property type="match status" value="1"/>
</dbReference>
<reference key="1">
    <citation type="journal article" date="2003" name="Proc. Natl. Acad. Sci. U.S.A.">
        <title>The complete genome sequence of the carcinogenic bacterium Helicobacter hepaticus.</title>
        <authorList>
            <person name="Suerbaum S."/>
            <person name="Josenhans C."/>
            <person name="Sterzenbach T."/>
            <person name="Drescher B."/>
            <person name="Brandt P."/>
            <person name="Bell M."/>
            <person name="Droege M."/>
            <person name="Fartmann B."/>
            <person name="Fischer H.-P."/>
            <person name="Ge Z."/>
            <person name="Hoerster A."/>
            <person name="Holland R."/>
            <person name="Klein K."/>
            <person name="Koenig J."/>
            <person name="Macko L."/>
            <person name="Mendz G.L."/>
            <person name="Nyakatura G."/>
            <person name="Schauer D.B."/>
            <person name="Shen Z."/>
            <person name="Weber J."/>
            <person name="Frosch M."/>
            <person name="Fox J.G."/>
        </authorList>
    </citation>
    <scope>NUCLEOTIDE SEQUENCE [LARGE SCALE GENOMIC DNA]</scope>
    <source>
        <strain>ATCC 51449 / 3B1</strain>
    </source>
</reference>
<keyword id="KW-1185">Reference proteome</keyword>
<keyword id="KW-0687">Ribonucleoprotein</keyword>
<keyword id="KW-0689">Ribosomal protein</keyword>
<keyword id="KW-0694">RNA-binding</keyword>
<keyword id="KW-0699">rRNA-binding</keyword>
<evidence type="ECO:0000255" key="1">
    <source>
        <dbReference type="HAMAP-Rule" id="MF_00501"/>
    </source>
</evidence>
<evidence type="ECO:0000305" key="2"/>
<feature type="chain" id="PRO_0000173114" description="Large ribosomal subunit protein bL31">
    <location>
        <begin position="1"/>
        <end position="68"/>
    </location>
</feature>
<gene>
    <name evidence="1" type="primary">rpmE</name>
    <name type="ordered locus">HH_1744</name>
</gene>
<organism>
    <name type="scientific">Helicobacter hepaticus (strain ATCC 51449 / 3B1)</name>
    <dbReference type="NCBI Taxonomy" id="235279"/>
    <lineage>
        <taxon>Bacteria</taxon>
        <taxon>Pseudomonadati</taxon>
        <taxon>Campylobacterota</taxon>
        <taxon>Epsilonproteobacteria</taxon>
        <taxon>Campylobacterales</taxon>
        <taxon>Helicobacteraceae</taxon>
        <taxon>Helicobacter</taxon>
    </lineage>
</organism>
<name>RL31_HELHP</name>